<name>PA2B9_LATCO</name>
<evidence type="ECO:0000250" key="1"/>
<evidence type="ECO:0000255" key="2"/>
<evidence type="ECO:0000255" key="3">
    <source>
        <dbReference type="PROSITE-ProRule" id="PRU10035"/>
    </source>
</evidence>
<evidence type="ECO:0000255" key="4">
    <source>
        <dbReference type="PROSITE-ProRule" id="PRU10036"/>
    </source>
</evidence>
<evidence type="ECO:0000305" key="5"/>
<proteinExistence type="inferred from homology"/>
<sequence length="155" mass="16908">MYPAHLLVLLAVCVSLLGASAISPRPLNLIQFSQLIQCANKGKRPTLHYMDYGCYCGKGGSGTPVDALDRCCKTHDDCYGQAGKKGCIPFVTLYNFGCFPGAPQCGKGNTCQRFVCACDLKAALCFAKSPYNNNNYNIDTKKKCQTLIYARLQTQ</sequence>
<organism>
    <name type="scientific">Laticauda colubrina</name>
    <name type="common">Yellow-lipped sea krait</name>
    <name type="synonym">Banded sea krait</name>
    <dbReference type="NCBI Taxonomy" id="8628"/>
    <lineage>
        <taxon>Eukaryota</taxon>
        <taxon>Metazoa</taxon>
        <taxon>Chordata</taxon>
        <taxon>Craniata</taxon>
        <taxon>Vertebrata</taxon>
        <taxon>Euteleostomi</taxon>
        <taxon>Lepidosauria</taxon>
        <taxon>Squamata</taxon>
        <taxon>Bifurcata</taxon>
        <taxon>Unidentata</taxon>
        <taxon>Episquamata</taxon>
        <taxon>Toxicofera</taxon>
        <taxon>Serpentes</taxon>
        <taxon>Colubroidea</taxon>
        <taxon>Elapidae</taxon>
        <taxon>Laticaudinae</taxon>
        <taxon>Laticauda</taxon>
    </lineage>
</organism>
<keyword id="KW-0106">Calcium</keyword>
<keyword id="KW-1015">Disulfide bond</keyword>
<keyword id="KW-0378">Hydrolase</keyword>
<keyword id="KW-0442">Lipid degradation</keyword>
<keyword id="KW-0443">Lipid metabolism</keyword>
<keyword id="KW-0479">Metal-binding</keyword>
<keyword id="KW-0528">Neurotoxin</keyword>
<keyword id="KW-0638">Presynaptic neurotoxin</keyword>
<keyword id="KW-0964">Secreted</keyword>
<keyword id="KW-0732">Signal</keyword>
<keyword id="KW-0800">Toxin</keyword>
<reference key="1">
    <citation type="journal article" date="2002" name="Toxicon">
        <title>A comparative analysis of invaded sequences from group IA phospholipase A(2) genes provides evidence about the divergence period of genes groups and snake families.</title>
        <authorList>
            <person name="Fujimi T.J."/>
            <person name="Tsuchiya T."/>
            <person name="Tamiya T."/>
        </authorList>
    </citation>
    <scope>NUCLEOTIDE SEQUENCE [GENOMIC DNA]</scope>
    <source>
        <tissue>Liver</tissue>
    </source>
</reference>
<feature type="signal peptide" evidence="2">
    <location>
        <begin position="1"/>
        <end position="21"/>
    </location>
</feature>
<feature type="propeptide" id="PRO_0000022880" evidence="1">
    <location>
        <begin position="22"/>
        <end position="27"/>
    </location>
</feature>
<feature type="chain" id="PRO_0000022881" description="Basic phospholipase A2 PC9">
    <location>
        <begin position="28"/>
        <end position="155"/>
    </location>
</feature>
<feature type="active site" evidence="1">
    <location>
        <position position="75"/>
    </location>
</feature>
<feature type="active site" evidence="1">
    <location>
        <position position="119"/>
    </location>
</feature>
<feature type="binding site" evidence="1">
    <location>
        <position position="55"/>
    </location>
    <ligand>
        <name>Ca(2+)</name>
        <dbReference type="ChEBI" id="CHEBI:29108"/>
    </ligand>
</feature>
<feature type="binding site" evidence="1">
    <location>
        <position position="57"/>
    </location>
    <ligand>
        <name>Ca(2+)</name>
        <dbReference type="ChEBI" id="CHEBI:29108"/>
    </ligand>
</feature>
<feature type="binding site" evidence="1">
    <location>
        <position position="59"/>
    </location>
    <ligand>
        <name>Ca(2+)</name>
        <dbReference type="ChEBI" id="CHEBI:29108"/>
    </ligand>
</feature>
<feature type="binding site" evidence="1">
    <location>
        <position position="76"/>
    </location>
    <ligand>
        <name>Ca(2+)</name>
        <dbReference type="ChEBI" id="CHEBI:29108"/>
    </ligand>
</feature>
<feature type="disulfide bond" evidence="1">
    <location>
        <begin position="38"/>
        <end position="98"/>
    </location>
</feature>
<feature type="disulfide bond" evidence="1">
    <location>
        <begin position="54"/>
        <end position="144"/>
    </location>
</feature>
<feature type="disulfide bond" evidence="1">
    <location>
        <begin position="56"/>
        <end position="72"/>
    </location>
</feature>
<feature type="disulfide bond" evidence="1">
    <location>
        <begin position="71"/>
        <end position="125"/>
    </location>
</feature>
<feature type="disulfide bond" evidence="1">
    <location>
        <begin position="78"/>
        <end position="118"/>
    </location>
</feature>
<feature type="disulfide bond" evidence="1">
    <location>
        <begin position="87"/>
        <end position="111"/>
    </location>
</feature>
<feature type="disulfide bond" evidence="1">
    <location>
        <begin position="105"/>
        <end position="116"/>
    </location>
</feature>
<dbReference type="EC" id="3.1.1.4"/>
<dbReference type="EMBL" id="AB062446">
    <property type="protein sequence ID" value="BAB72253.1"/>
    <property type="molecule type" value="Genomic_DNA"/>
</dbReference>
<dbReference type="SMR" id="Q8UUH9"/>
<dbReference type="GO" id="GO:0005576">
    <property type="term" value="C:extracellular region"/>
    <property type="evidence" value="ECO:0007669"/>
    <property type="project" value="UniProtKB-SubCell"/>
</dbReference>
<dbReference type="GO" id="GO:0005509">
    <property type="term" value="F:calcium ion binding"/>
    <property type="evidence" value="ECO:0007669"/>
    <property type="project" value="InterPro"/>
</dbReference>
<dbReference type="GO" id="GO:0047498">
    <property type="term" value="F:calcium-dependent phospholipase A2 activity"/>
    <property type="evidence" value="ECO:0007669"/>
    <property type="project" value="TreeGrafter"/>
</dbReference>
<dbReference type="GO" id="GO:0005543">
    <property type="term" value="F:phospholipid binding"/>
    <property type="evidence" value="ECO:0007669"/>
    <property type="project" value="TreeGrafter"/>
</dbReference>
<dbReference type="GO" id="GO:0090729">
    <property type="term" value="F:toxin activity"/>
    <property type="evidence" value="ECO:0007669"/>
    <property type="project" value="UniProtKB-KW"/>
</dbReference>
<dbReference type="GO" id="GO:0050482">
    <property type="term" value="P:arachidonate secretion"/>
    <property type="evidence" value="ECO:0007669"/>
    <property type="project" value="InterPro"/>
</dbReference>
<dbReference type="GO" id="GO:0016042">
    <property type="term" value="P:lipid catabolic process"/>
    <property type="evidence" value="ECO:0007669"/>
    <property type="project" value="UniProtKB-KW"/>
</dbReference>
<dbReference type="GO" id="GO:0006644">
    <property type="term" value="P:phospholipid metabolic process"/>
    <property type="evidence" value="ECO:0007669"/>
    <property type="project" value="InterPro"/>
</dbReference>
<dbReference type="CDD" id="cd00125">
    <property type="entry name" value="PLA2c"/>
    <property type="match status" value="1"/>
</dbReference>
<dbReference type="FunFam" id="1.20.90.10:FF:000007">
    <property type="entry name" value="Acidic phospholipase A2"/>
    <property type="match status" value="1"/>
</dbReference>
<dbReference type="Gene3D" id="1.20.90.10">
    <property type="entry name" value="Phospholipase A2 domain"/>
    <property type="match status" value="1"/>
</dbReference>
<dbReference type="InterPro" id="IPR001211">
    <property type="entry name" value="PLipase_A2"/>
</dbReference>
<dbReference type="InterPro" id="IPR033112">
    <property type="entry name" value="PLipase_A2_Asp_AS"/>
</dbReference>
<dbReference type="InterPro" id="IPR016090">
    <property type="entry name" value="PLipase_A2_dom"/>
</dbReference>
<dbReference type="InterPro" id="IPR036444">
    <property type="entry name" value="PLipase_A2_dom_sf"/>
</dbReference>
<dbReference type="InterPro" id="IPR033113">
    <property type="entry name" value="PLipase_A2_His_AS"/>
</dbReference>
<dbReference type="PANTHER" id="PTHR11716:SF100">
    <property type="entry name" value="PHOSPHOLIPASE A2"/>
    <property type="match status" value="1"/>
</dbReference>
<dbReference type="PANTHER" id="PTHR11716">
    <property type="entry name" value="PHOSPHOLIPASE A2 FAMILY MEMBER"/>
    <property type="match status" value="1"/>
</dbReference>
<dbReference type="Pfam" id="PF00068">
    <property type="entry name" value="Phospholip_A2_1"/>
    <property type="match status" value="1"/>
</dbReference>
<dbReference type="PRINTS" id="PR00389">
    <property type="entry name" value="PHPHLIPASEA2"/>
</dbReference>
<dbReference type="SMART" id="SM00085">
    <property type="entry name" value="PA2c"/>
    <property type="match status" value="1"/>
</dbReference>
<dbReference type="SUPFAM" id="SSF48619">
    <property type="entry name" value="Phospholipase A2, PLA2"/>
    <property type="match status" value="1"/>
</dbReference>
<dbReference type="PROSITE" id="PS00119">
    <property type="entry name" value="PA2_ASP"/>
    <property type="match status" value="1"/>
</dbReference>
<dbReference type="PROSITE" id="PS00118">
    <property type="entry name" value="PA2_HIS"/>
    <property type="match status" value="1"/>
</dbReference>
<accession>Q8UUH9</accession>
<comment type="function">
    <text evidence="1">Snake venom phospholipase A2 (PLA2) that inhibits neuromuscular transmission by blocking acetylcholine release from the nerve termini. PLA2 catalyzes the calcium-dependent hydrolysis of the 2-acyl groups in 3-sn-phosphoglycerides (By similarity).</text>
</comment>
<comment type="catalytic activity">
    <reaction evidence="3 4">
        <text>a 1,2-diacyl-sn-glycero-3-phosphocholine + H2O = a 1-acyl-sn-glycero-3-phosphocholine + a fatty acid + H(+)</text>
        <dbReference type="Rhea" id="RHEA:15801"/>
        <dbReference type="ChEBI" id="CHEBI:15377"/>
        <dbReference type="ChEBI" id="CHEBI:15378"/>
        <dbReference type="ChEBI" id="CHEBI:28868"/>
        <dbReference type="ChEBI" id="CHEBI:57643"/>
        <dbReference type="ChEBI" id="CHEBI:58168"/>
        <dbReference type="EC" id="3.1.1.4"/>
    </reaction>
</comment>
<comment type="cofactor">
    <cofactor evidence="1">
        <name>Ca(2+)</name>
        <dbReference type="ChEBI" id="CHEBI:29108"/>
    </cofactor>
    <text evidence="1">Binds 1 Ca(2+) ion.</text>
</comment>
<comment type="subcellular location">
    <subcellularLocation>
        <location evidence="1">Secreted</location>
    </subcellularLocation>
</comment>
<comment type="tissue specificity">
    <text>Expressed by the venom gland.</text>
</comment>
<comment type="similarity">
    <text evidence="5">Belongs to the phospholipase A2 family. Group I subfamily. D49 sub-subfamily.</text>
</comment>
<protein>
    <recommendedName>
        <fullName>Basic phospholipase A2 PC9</fullName>
        <shortName>svPLA2</shortName>
        <ecNumber>3.1.1.4</ecNumber>
    </recommendedName>
    <alternativeName>
        <fullName>Phosphatidylcholine 2-acylhydrolase</fullName>
    </alternativeName>
</protein>